<accession>O60469</accession>
<accession>O60468</accession>
<name>DSCAM_HUMAN</name>
<reference key="1">
    <citation type="journal article" date="1998" name="Hum. Mol. Genet.">
        <title>DSCAM: a novel member of the immunoglobulin superfamily maps in a Down syndrome region and is involved in the development of the nervous system.</title>
        <authorList>
            <person name="Yamakawa K."/>
            <person name="Huot Y.-K."/>
            <person name="Haendelt M.A."/>
            <person name="Hubert R."/>
            <person name="Chen X.-N."/>
            <person name="Lyons G.E."/>
            <person name="Korenberg J.R."/>
        </authorList>
    </citation>
    <scope>NUCLEOTIDE SEQUENCE [MRNA]</scope>
    <scope>ALTERNATIVE SPLICING</scope>
    <source>
        <tissue>Brain</tissue>
    </source>
</reference>
<reference key="2">
    <citation type="journal article" date="2000" name="Brain Res. Mol. Brain Res.">
        <title>Down syndrome cell adhesion molecule DSCAM mediates homophilic intercellular adhesion.</title>
        <authorList>
            <person name="Agarwala K.L."/>
            <person name="Nakamura S."/>
            <person name="Tsutsumi Y."/>
            <person name="Yamakawa K."/>
        </authorList>
    </citation>
    <scope>NUCLEOTIDE SEQUENCE [MRNA]</scope>
    <scope>FUNCTION</scope>
</reference>
<reference key="3">
    <citation type="journal article" date="2000" name="Nature">
        <title>The DNA sequence of human chromosome 21.</title>
        <authorList>
            <person name="Hattori M."/>
            <person name="Fujiyama A."/>
            <person name="Taylor T.D."/>
            <person name="Watanabe H."/>
            <person name="Yada T."/>
            <person name="Park H.-S."/>
            <person name="Toyoda A."/>
            <person name="Ishii K."/>
            <person name="Totoki Y."/>
            <person name="Choi D.-K."/>
            <person name="Groner Y."/>
            <person name="Soeda E."/>
            <person name="Ohki M."/>
            <person name="Takagi T."/>
            <person name="Sakaki Y."/>
            <person name="Taudien S."/>
            <person name="Blechschmidt K."/>
            <person name="Polley A."/>
            <person name="Menzel U."/>
            <person name="Delabar J."/>
            <person name="Kumpf K."/>
            <person name="Lehmann R."/>
            <person name="Patterson D."/>
            <person name="Reichwald K."/>
            <person name="Rump A."/>
            <person name="Schillhabel M."/>
            <person name="Schudy A."/>
            <person name="Zimmermann W."/>
            <person name="Rosenthal A."/>
            <person name="Kudoh J."/>
            <person name="Shibuya K."/>
            <person name="Kawasaki K."/>
            <person name="Asakawa S."/>
            <person name="Shintani A."/>
            <person name="Sasaki T."/>
            <person name="Nagamine K."/>
            <person name="Mitsuyama S."/>
            <person name="Antonarakis S.E."/>
            <person name="Minoshima S."/>
            <person name="Shimizu N."/>
            <person name="Nordsiek G."/>
            <person name="Hornischer K."/>
            <person name="Brandt P."/>
            <person name="Scharfe M."/>
            <person name="Schoen O."/>
            <person name="Desario A."/>
            <person name="Reichelt J."/>
            <person name="Kauer G."/>
            <person name="Bloecker H."/>
            <person name="Ramser J."/>
            <person name="Beck A."/>
            <person name="Klages S."/>
            <person name="Hennig S."/>
            <person name="Riesselmann L."/>
            <person name="Dagand E."/>
            <person name="Wehrmeyer S."/>
            <person name="Borzym K."/>
            <person name="Gardiner K."/>
            <person name="Nizetic D."/>
            <person name="Francis F."/>
            <person name="Lehrach H."/>
            <person name="Reinhardt R."/>
            <person name="Yaspo M.-L."/>
        </authorList>
    </citation>
    <scope>NUCLEOTIDE SEQUENCE [LARGE SCALE GENOMIC DNA]</scope>
</reference>
<reference key="4">
    <citation type="journal article" date="2004" name="J. Biol. Chem.">
        <title>The Down syndrome cell adhesion molecule (DSCAM) interacts with and activates Pak.</title>
        <authorList>
            <person name="Li W."/>
            <person name="Guan K.L."/>
        </authorList>
    </citation>
    <scope>RETRACTED PAPER</scope>
</reference>
<reference key="5">
    <citation type="journal article" date="2015" name="J. Biol. Chem.">
        <title>The Down syndrome cell adhesion molecule (DSCAM) interacts with and activates Pak.</title>
        <authorList>
            <person name="Li W."/>
            <person name="Guan K.L."/>
        </authorList>
    </citation>
    <scope>RETRACTION NOTICE OF PUBMED:15169762</scope>
</reference>
<reference key="6">
    <citation type="journal article" date="2008" name="Cell">
        <title>DSCAM is a netrin receptor that collaborates with DCC in mediating turning responses to netrin-1.</title>
        <authorList>
            <person name="Ly A."/>
            <person name="Nikolaev A."/>
            <person name="Suresh G."/>
            <person name="Zheng Y."/>
            <person name="Tessier-Lavigne M."/>
            <person name="Stein E."/>
        </authorList>
    </citation>
    <scope>FUNCTION</scope>
</reference>
<reference key="7">
    <citation type="journal article" date="2009" name="Proc. Natl. Acad. Sci. U.S.A.">
        <title>DSCAM functions as a netrin receptor in commissural axon pathfinding.</title>
        <authorList>
            <person name="Liu G."/>
            <person name="Li W."/>
            <person name="Wang L."/>
            <person name="Kar A."/>
            <person name="Guan K.L."/>
            <person name="Rao Y."/>
            <person name="Wu J.Y."/>
        </authorList>
    </citation>
    <scope>FUNCTION</scope>
    <scope>INTERACTION WITH NTN1</scope>
    <scope>PHOSPHORYLATION</scope>
</reference>
<reference key="8">
    <citation type="journal article" date="2012" name="J. Biol. Chem.">
        <title>Down syndrome cell adhesion molecule (DSCAM) associates with uncoordinated-5C (UNC5C) in netrin-1-mediated growth cone collapse.</title>
        <authorList>
            <person name="Purohit A.A."/>
            <person name="Li W."/>
            <person name="Qu C."/>
            <person name="Dwyer T."/>
            <person name="Shao Q."/>
            <person name="Guan K.L."/>
            <person name="Liu G."/>
        </authorList>
    </citation>
    <scope>INTERACTION WITH UNC5C</scope>
</reference>
<comment type="function">
    <text evidence="2 3 8 9 10">Cell adhesion molecule that plays a role in neuronal self-avoidance. Promotes repulsion between specific neuronal processes of either the same cell or the same subtype of cells. Mediates within retinal amacrine and ganglion cell subtypes both isoneuronal self-avoidance for creating an orderly dendritic arborization and heteroneuronal self-avoidance to maintain the mosaic spacing between amacrine and ganglion cell bodies (PubMed:10925149). Receptor for netrin required for axon guidance independently of and in collaboration with the receptor DCC. Might also collaborate with UNC5C in NTN1-mediated axon repulsion independently of DCC (By similarity). In spinal cord development plays a role in guiding commissural axons projection and pathfinding across the ventral midline to reach the floor plate upon ligand binding (PubMed:18585357, PubMed:19196994). Mediates intracellular signaling by stimulating the activation of MAPK8 and MAP kinase p38 (PubMed:18585357, PubMed:19196994). Adhesion molecule that promotes lamina-specific synaptic connections in the retina: expressed in specific subsets of interneurons and retinal ganglion cells (RGCs) and promotes synaptic connectivity via homophilic interactions (By similarity).</text>
</comment>
<comment type="subunit">
    <text evidence="2 3 10 11">Homodimer; mediates homophilic interactions to promote cell adhesion (By similarity). Interacts with DCC; the interaction is abolished in response to NTN1 (By similarity). Interacts (via extracellular domain) with NTN1 (PubMed:19196994). Interacts (via extracellular domain) with UNC5C (via Ig-like C2-type domain) (PubMed:22685302). Interacts with PTK2 (By similarity). Interacts with FYN (By similarity).</text>
</comment>
<comment type="interaction">
    <interactant intactId="EBI-19949317">
        <id>O60469</id>
    </interactant>
    <interactant intactId="EBI-80426">
        <id>Q15700</id>
        <label>DLG2</label>
    </interactant>
    <organismsDiffer>false</organismsDiffer>
    <experiments>3</experiments>
</comment>
<comment type="interaction">
    <interactant intactId="EBI-19949317">
        <id>O60469</id>
    </interactant>
    <interactant intactId="EBI-10232538">
        <id>Q8WWB5</id>
        <label>PIH1D2</label>
    </interactant>
    <organismsDiffer>false</organismsDiffer>
    <experiments>3</experiments>
</comment>
<comment type="subcellular location">
    <molecule>Isoform Short</molecule>
    <subcellularLocation>
        <location evidence="12">Secreted</location>
    </subcellularLocation>
</comment>
<comment type="subcellular location">
    <molecule>Isoform Long</molecule>
    <subcellularLocation>
        <location evidence="3">Cell membrane</location>
        <topology evidence="3">Single-pass type I membrane protein</topology>
    </subcellularLocation>
    <subcellularLocation>
        <location evidence="3">Cell projection</location>
        <location evidence="3">Axon</location>
    </subcellularLocation>
    <subcellularLocation>
        <location evidence="3">Cell projection</location>
        <location evidence="3">Dendrite</location>
    </subcellularLocation>
    <subcellularLocation>
        <location evidence="3">Cell projection</location>
        <location evidence="3">Growth cone</location>
    </subcellularLocation>
    <subcellularLocation>
        <location evidence="2">Synapse</location>
    </subcellularLocation>
    <text evidence="3">Localized in the soma, cell membrane, axon and growth cone of dissociated commissural axons.</text>
</comment>
<comment type="alternative products">
    <event type="alternative splicing"/>
    <isoform>
        <id>O60469-1</id>
        <name>Long</name>
        <name>CHD2-42</name>
        <sequence type="displayed"/>
    </isoform>
    <isoform>
        <id>O60469-2</id>
        <name>Short</name>
        <name>CHD2-52</name>
        <sequence type="described" ref="VSP_002502 VSP_002503"/>
    </isoform>
</comment>
<comment type="tissue specificity">
    <text>Primarily expressed in brain.</text>
</comment>
<comment type="domain">
    <text evidence="1">Ig-like C2-type domains 7 to 9 are sufficient for interaction with NTN1 and commissural axon outgrowth. The transmembrane domain is necessary for interaction with DCC (By similarity).</text>
</comment>
<comment type="PTM">
    <text evidence="10">Phosphorylated at tyrosine residues. Phosphorylation is enhanced by NTN1.</text>
</comment>
<comment type="caution">
    <text evidence="13 14">Has been reported to enhance netrin-induced phosphorylation of PAK1 and FYN; and the interaction between DSCAM, PAK1 and RAC1 has been described. This article has been withdrawn by the authors.</text>
</comment>
<evidence type="ECO:0000250" key="1"/>
<evidence type="ECO:0000250" key="2">
    <source>
        <dbReference type="UniProtKB" id="F1NY98"/>
    </source>
</evidence>
<evidence type="ECO:0000250" key="3">
    <source>
        <dbReference type="UniProtKB" id="Q9ERC8"/>
    </source>
</evidence>
<evidence type="ECO:0000255" key="4"/>
<evidence type="ECO:0000255" key="5">
    <source>
        <dbReference type="PROSITE-ProRule" id="PRU00114"/>
    </source>
</evidence>
<evidence type="ECO:0000255" key="6">
    <source>
        <dbReference type="PROSITE-ProRule" id="PRU00316"/>
    </source>
</evidence>
<evidence type="ECO:0000256" key="7">
    <source>
        <dbReference type="SAM" id="MobiDB-lite"/>
    </source>
</evidence>
<evidence type="ECO:0000269" key="8">
    <source>
    </source>
</evidence>
<evidence type="ECO:0000269" key="9">
    <source>
    </source>
</evidence>
<evidence type="ECO:0000269" key="10">
    <source>
    </source>
</evidence>
<evidence type="ECO:0000269" key="11">
    <source>
    </source>
</evidence>
<evidence type="ECO:0000305" key="12"/>
<evidence type="ECO:0000305" key="13">
    <source>
    </source>
</evidence>
<evidence type="ECO:0000305" key="14">
    <source>
    </source>
</evidence>
<sequence>MWILALSLFQSFANVFSEDLHSSLYFVNASLQEVVFASTTGTLVPCPAAGIPPVTLRWYLATGEEIYDVPGIRHVHPNGTLQIFPFPPSSFSTLIHDNTYYCTAENPSGKIRSQDVHIKAVLREPYTVRVEDQKTMRGNVAVFKCIIPSSVEAYITVVSWEKDTVSLVSGSRFLITSTGALYIKDVQNEDGLYNYRCITRHRYTGETRQSNSARLFVSDPANSAPSILDGFDHRKAMAGQRVELPCKALGHPEPDYRWLKDNMPLELSGRFQKTVTGLLIENIRPSDSGSYVCEVSNRYGTAKVIGRLYVKQPLKATISPRKVKSSVGSQVSLSCSVTGTEDQELSWYRNGEILNPGKNVRITGINHENLIMDHMVKSDGGAYQCFVRKDKLSAQDYVQVVLEDGTPKIISAFSEKVVSPAEPVSLMCNVKGTPLPTITWTLDDDPILKGGSHRISQMITSEGNVVSYLNISSSQVRDGGVYRCTANNSAGVVLYQARINVRGPASIRPMKNITAIAGRDTYIHCRVIGYPYYSIKWYKNSNLLPFNHRQVAFENNGTLKLSDVQKEVDEGEYTCNVLVQPQLSTSQSVHVTVKVPPFIQPFEFPRFSIGQRVFIPCVVVSGDLPITITWQKDGRPIPGSLGVTIDNIDFTSSLRISNLSLMHNGNYTCIARNEAAAVEHQSQLIVRVPPKFVVQPRDQDGIYGKAVILNCSAEGYPVPTIVWKFSKGAGVPQFQPIALNGRIQVLSNGSLLIKHVVEEDSGYYLCKVSNDVGADVSKSMYLTVKIPAMITSYPNTTLATQGQKKEMSCTAHGEKPIIVRWEKEDRIINPEMARYLVSTKEVGEEVISTLQILPTVREDSGFFSCHAINSYGEDRGIIQLTVQEPPDPPEIEIKDVKARTITLRWTMGFDGNSPITGYDIECKNKSDSWDSAQRTKDVSPQLNSATIIDIHPSSTYSIRMYAKNRIGKSEPSNELTITADEAAPDGPPQEVHLEPISSQSIRVTWKAPKKHLQNGIIRGYQIGYREYSTGGNFQFNIISVDTSGDSEVYTLDNLNKFTQYGLVVQACNRAGTGPSSQEIITTTLEDVPSYPPENVQAIATSPESISISWSTLSKEALNGILQGFRVIYWANLMDGELGEIKNITTTQPSLELDGLEKYTNYSIQVLAFTRAGDGVRSEQIFTRTKEDVPGPPAGVKAAAASASMVFVSWLPPLKLNGIIRKYTVFCSHPYPTVISEFEASPDSFSYRIPNLSRNRQYSVWVVAVTSAGRGNSSEIITVEPLAKAPARILTFSGTVTTPWMKDIVLPCKAVGDPSPAVKWMKDSNGTPSLVTIDGRRSIFSNGSFIIRTVKAEDSGYYSCIANNNWGSDEIILNLQVQVPPDQPRLTVSKTTSSSITLSWLPGDNGGSSIRGYILQYSEDNSEQWGSFPISPSERSYRLENLKCGTWYKFTLTAQNGVGPGRISEIIEAKTLGKEPQFSKEQELFASINTTRVRLNLIGWNDGGCPITSFTLEYRPFGTTVWTTAQRTSLSKSYILYDLQEATWYELQMRVCNSAGCAEKQANFATLNYDGSTIPPLIKSVVQNEEGLTTNEGLKMLVTISCILVGVLLLFVLLLVVRRRRREQRLKRLRDAKSLAEMLMSKNTRTSDTLSKQQQTLRMHIDIPRAQLLIEERDTMETIDDRSTVLLTDADFGEAAKQKSLTVTHTVHYQSVSQATGPLVDVSDARPGTNPTTRRNAKAGPTARNRYASQWTLNRPHPTISAHTLTTDWRLPTPRAAGSVDKESDSYSVSPSQDTDRARSSMVSTESASSTYEELARAYEHAKMEEQLRHAKFTITECFISDTSSEQLTAGTNEYTDSLTSSTPSESGICRFTASPPKPQDGGRVMNMAVPKAHRPGDLIHLPPYLRMDFLLNRGGPGTSRDLSLGQACLEPQKSRTLKRPTVLEPIPMEAASSASSTREGQSWQPGAVATLPQREGAELGQAAKMSSSQESLLDSRGHLKGNNPYAKSYTLV</sequence>
<gene>
    <name type="primary">DSCAM</name>
</gene>
<feature type="signal peptide" evidence="4">
    <location>
        <begin position="1"/>
        <end position="17"/>
    </location>
</feature>
<feature type="chain" id="PRO_0000014747" description="Cell adhesion molecule DSCAM">
    <location>
        <begin position="18"/>
        <end position="2012"/>
    </location>
</feature>
<feature type="topological domain" description="Extracellular" evidence="4">
    <location>
        <begin position="18"/>
        <end position="1595"/>
    </location>
</feature>
<feature type="transmembrane region" description="Helical" evidence="4">
    <location>
        <begin position="1596"/>
        <end position="1616"/>
    </location>
</feature>
<feature type="topological domain" description="Cytoplasmic" evidence="4">
    <location>
        <begin position="1617"/>
        <end position="2012"/>
    </location>
</feature>
<feature type="domain" description="Ig-like C2-type 1">
    <location>
        <begin position="39"/>
        <end position="129"/>
    </location>
</feature>
<feature type="domain" description="Ig-like C2-type 2">
    <location>
        <begin position="125"/>
        <end position="216"/>
    </location>
</feature>
<feature type="domain" description="Ig-like C2-type 3">
    <location>
        <begin position="225"/>
        <end position="305"/>
    </location>
</feature>
<feature type="domain" description="Ig-like C2-type 4">
    <location>
        <begin position="313"/>
        <end position="401"/>
    </location>
</feature>
<feature type="domain" description="Ig-like C2-type 5">
    <location>
        <begin position="407"/>
        <end position="500"/>
    </location>
</feature>
<feature type="domain" description="Ig-like C2-type 6">
    <location>
        <begin position="504"/>
        <end position="592"/>
    </location>
</feature>
<feature type="domain" description="Ig-like C2-type 7">
    <location>
        <begin position="596"/>
        <end position="685"/>
    </location>
</feature>
<feature type="domain" description="Ig-like C2-type 8">
    <location>
        <begin position="690"/>
        <end position="783"/>
    </location>
</feature>
<feature type="domain" description="Ig-like C2-type 9">
    <location>
        <begin position="787"/>
        <end position="883"/>
    </location>
</feature>
<feature type="domain" description="Fibronectin type-III 1" evidence="6">
    <location>
        <begin position="885"/>
        <end position="982"/>
    </location>
</feature>
<feature type="domain" description="Fibronectin type-III 2" evidence="6">
    <location>
        <begin position="987"/>
        <end position="1086"/>
    </location>
</feature>
<feature type="domain" description="Fibronectin type-III 3" evidence="6">
    <location>
        <begin position="1091"/>
        <end position="1187"/>
    </location>
</feature>
<feature type="domain" description="Fibronectin type-III 4" evidence="6">
    <location>
        <begin position="1191"/>
        <end position="1285"/>
    </location>
</feature>
<feature type="domain" description="Ig-like C2-type 10">
    <location>
        <begin position="1285"/>
        <end position="1377"/>
    </location>
</feature>
<feature type="domain" description="Fibronectin type-III 5" evidence="6">
    <location>
        <begin position="1379"/>
        <end position="1473"/>
    </location>
</feature>
<feature type="domain" description="Fibronectin type-III 6" evidence="6">
    <location>
        <begin position="1474"/>
        <end position="1575"/>
    </location>
</feature>
<feature type="region of interest" description="Required for netrin-mediated axon repulsion of neuronal growth cones" evidence="3">
    <location>
        <begin position="1617"/>
        <end position="2012"/>
    </location>
</feature>
<feature type="region of interest" description="Disordered" evidence="7">
    <location>
        <begin position="1718"/>
        <end position="1810"/>
    </location>
</feature>
<feature type="region of interest" description="Disordered" evidence="7">
    <location>
        <begin position="1855"/>
        <end position="1883"/>
    </location>
</feature>
<feature type="region of interest" description="Disordered" evidence="7">
    <location>
        <begin position="1971"/>
        <end position="2012"/>
    </location>
</feature>
<feature type="compositionally biased region" description="Low complexity" evidence="7">
    <location>
        <begin position="1799"/>
        <end position="1809"/>
    </location>
</feature>
<feature type="compositionally biased region" description="Polar residues" evidence="7">
    <location>
        <begin position="1855"/>
        <end position="1865"/>
    </location>
</feature>
<feature type="glycosylation site" description="N-linked (GlcNAc...) asparagine" evidence="4">
    <location>
        <position position="28"/>
    </location>
</feature>
<feature type="glycosylation site" description="N-linked (GlcNAc...) asparagine" evidence="4">
    <location>
        <position position="78"/>
    </location>
</feature>
<feature type="glycosylation site" description="N-linked (GlcNAc...) asparagine" evidence="4">
    <location>
        <position position="470"/>
    </location>
</feature>
<feature type="glycosylation site" description="N-linked (GlcNAc...) asparagine" evidence="4">
    <location>
        <position position="487"/>
    </location>
</feature>
<feature type="glycosylation site" description="N-linked (GlcNAc...) asparagine" evidence="4">
    <location>
        <position position="512"/>
    </location>
</feature>
<feature type="glycosylation site" description="N-linked (GlcNAc...) asparagine" evidence="4">
    <location>
        <position position="556"/>
    </location>
</feature>
<feature type="glycosylation site" description="N-linked (GlcNAc...) asparagine" evidence="4">
    <location>
        <position position="658"/>
    </location>
</feature>
<feature type="glycosylation site" description="N-linked (GlcNAc...) asparagine" evidence="4">
    <location>
        <position position="666"/>
    </location>
</feature>
<feature type="glycosylation site" description="N-linked (GlcNAc...) asparagine" evidence="4">
    <location>
        <position position="710"/>
    </location>
</feature>
<feature type="glycosylation site" description="N-linked (GlcNAc...) asparagine" evidence="4">
    <location>
        <position position="748"/>
    </location>
</feature>
<feature type="glycosylation site" description="N-linked (GlcNAc...) asparagine" evidence="4">
    <location>
        <position position="795"/>
    </location>
</feature>
<feature type="glycosylation site" description="N-linked (GlcNAc...) asparagine" evidence="4">
    <location>
        <position position="924"/>
    </location>
</feature>
<feature type="glycosylation site" description="N-linked (GlcNAc...) asparagine" evidence="4">
    <location>
        <position position="1142"/>
    </location>
</feature>
<feature type="glycosylation site" description="N-linked (GlcNAc...) asparagine" evidence="4">
    <location>
        <position position="1160"/>
    </location>
</feature>
<feature type="glycosylation site" description="N-linked (GlcNAc...) asparagine" evidence="4">
    <location>
        <position position="1250"/>
    </location>
</feature>
<feature type="glycosylation site" description="N-linked (GlcNAc...) asparagine" evidence="4">
    <location>
        <position position="1271"/>
    </location>
</feature>
<feature type="glycosylation site" description="N-linked (GlcNAc...) asparagine" evidence="4">
    <location>
        <position position="1341"/>
    </location>
</feature>
<feature type="glycosylation site" description="N-linked (GlcNAc...) asparagine" evidence="4">
    <location>
        <position position="1488"/>
    </location>
</feature>
<feature type="disulfide bond" evidence="5">
    <location>
        <begin position="46"/>
        <end position="102"/>
    </location>
</feature>
<feature type="disulfide bond" evidence="5">
    <location>
        <begin position="145"/>
        <end position="197"/>
    </location>
</feature>
<feature type="disulfide bond" evidence="5">
    <location>
        <begin position="246"/>
        <end position="293"/>
    </location>
</feature>
<feature type="disulfide bond" evidence="5">
    <location>
        <begin position="335"/>
        <end position="385"/>
    </location>
</feature>
<feature type="disulfide bond" evidence="5">
    <location>
        <begin position="428"/>
        <end position="484"/>
    </location>
</feature>
<feature type="disulfide bond" evidence="5">
    <location>
        <begin position="525"/>
        <end position="575"/>
    </location>
</feature>
<feature type="disulfide bond" evidence="5">
    <location>
        <begin position="617"/>
        <end position="669"/>
    </location>
</feature>
<feature type="disulfide bond" evidence="5">
    <location>
        <begin position="711"/>
        <end position="766"/>
    </location>
</feature>
<feature type="disulfide bond" evidence="5">
    <location>
        <begin position="809"/>
        <end position="865"/>
    </location>
</feature>
<feature type="disulfide bond" evidence="5">
    <location>
        <begin position="1307"/>
        <end position="1359"/>
    </location>
</feature>
<feature type="splice variant" id="VSP_002502" description="In isoform Short." evidence="12">
    <original>NFATLNYDGS</original>
    <variation>KEAARCKEFS</variation>
    <location>
        <begin position="1562"/>
        <end position="1571"/>
    </location>
</feature>
<feature type="splice variant" id="VSP_002503" description="In isoform Short." evidence="12">
    <location>
        <begin position="1572"/>
        <end position="2012"/>
    </location>
</feature>
<feature type="sequence variant" id="VAR_020080" description="In dbSNP:rs2297270.">
    <original>D</original>
    <variation>E</variation>
    <location>
        <position position="232"/>
    </location>
</feature>
<feature type="sequence conflict" description="In Ref. 1; AAC17966." evidence="12" ref="1">
    <original>HRPGDLIHLPPYLRMDFLLNRGGPGTSRDLSLGQACLEPQKSRTLKRPTVLEPIPMEAASSASSTREGQSWQPGAVATLPQREGAELGQAAKMSSSQESLLDSRGHLKGNNPYAKSYTLV</original>
    <variation>IGQVTSYICLHTLEWTFC</variation>
    <location>
        <begin position="1893"/>
        <end position="2012"/>
    </location>
</feature>
<dbReference type="EMBL" id="AF023450">
    <property type="protein sequence ID" value="AAC17967.1"/>
    <property type="molecule type" value="mRNA"/>
</dbReference>
<dbReference type="EMBL" id="AF023449">
    <property type="protein sequence ID" value="AAC17966.1"/>
    <property type="molecule type" value="mRNA"/>
</dbReference>
<dbReference type="EMBL" id="AF217525">
    <property type="protein sequence ID" value="AAF27525.1"/>
    <property type="molecule type" value="mRNA"/>
</dbReference>
<dbReference type="EMBL" id="AL163283">
    <property type="protein sequence ID" value="CAB90464.1"/>
    <property type="molecule type" value="Genomic_DNA"/>
</dbReference>
<dbReference type="EMBL" id="AL163282">
    <property type="protein sequence ID" value="CAB90436.1"/>
    <property type="molecule type" value="Genomic_DNA"/>
</dbReference>
<dbReference type="EMBL" id="AL163281">
    <property type="protein sequence ID" value="CAB90444.1"/>
    <property type="molecule type" value="Genomic_DNA"/>
</dbReference>
<dbReference type="CCDS" id="CCDS42929.1">
    <molecule id="O60469-1"/>
</dbReference>
<dbReference type="RefSeq" id="NP_001380.2">
    <molecule id="O60469-1"/>
    <property type="nucleotide sequence ID" value="NM_001389.3"/>
</dbReference>
<dbReference type="PDB" id="6ZR7">
    <property type="method" value="X-ray"/>
    <property type="resolution" value="1.85 A"/>
    <property type="chains" value="AAA=595-884"/>
</dbReference>
<dbReference type="PDBsum" id="6ZR7"/>
<dbReference type="SMR" id="O60469"/>
<dbReference type="BioGRID" id="108160">
    <property type="interactions" value="160"/>
</dbReference>
<dbReference type="FunCoup" id="O60469">
    <property type="interactions" value="326"/>
</dbReference>
<dbReference type="IntAct" id="O60469">
    <property type="interactions" value="155"/>
</dbReference>
<dbReference type="STRING" id="9606.ENSP00000383303"/>
<dbReference type="GlyCosmos" id="O60469">
    <property type="glycosylation" value="18 sites, No reported glycans"/>
</dbReference>
<dbReference type="GlyGen" id="O60469">
    <property type="glycosylation" value="19 sites"/>
</dbReference>
<dbReference type="iPTMnet" id="O60469"/>
<dbReference type="PhosphoSitePlus" id="O60469"/>
<dbReference type="BioMuta" id="DSCAM"/>
<dbReference type="jPOST" id="O60469"/>
<dbReference type="MassIVE" id="O60469"/>
<dbReference type="PaxDb" id="9606-ENSP00000383303"/>
<dbReference type="PeptideAtlas" id="O60469"/>
<dbReference type="ProteomicsDB" id="49414">
    <molecule id="O60469-1"/>
</dbReference>
<dbReference type="ProteomicsDB" id="49415">
    <molecule id="O60469-2"/>
</dbReference>
<dbReference type="Antibodypedia" id="23484">
    <property type="antibodies" value="159 antibodies from 31 providers"/>
</dbReference>
<dbReference type="DNASU" id="1826"/>
<dbReference type="Ensembl" id="ENST00000400454.6">
    <molecule id="O60469-1"/>
    <property type="protein sequence ID" value="ENSP00000383303.1"/>
    <property type="gene ID" value="ENSG00000171587.15"/>
</dbReference>
<dbReference type="Ensembl" id="ENST00000708009.1">
    <molecule id="O60469-1"/>
    <property type="protein sequence ID" value="ENSP00000517071.1"/>
    <property type="gene ID" value="ENSG00000291561.1"/>
</dbReference>
<dbReference type="GeneID" id="1826"/>
<dbReference type="KEGG" id="hsa:1826"/>
<dbReference type="MANE-Select" id="ENST00000400454.6">
    <property type="protein sequence ID" value="ENSP00000383303.1"/>
    <property type="RefSeq nucleotide sequence ID" value="NM_001389.5"/>
    <property type="RefSeq protein sequence ID" value="NP_001380.2"/>
</dbReference>
<dbReference type="UCSC" id="uc002yyq.2">
    <molecule id="O60469-1"/>
    <property type="organism name" value="human"/>
</dbReference>
<dbReference type="AGR" id="HGNC:3039"/>
<dbReference type="CTD" id="1826"/>
<dbReference type="DisGeNET" id="1826"/>
<dbReference type="GeneCards" id="DSCAM"/>
<dbReference type="HGNC" id="HGNC:3039">
    <property type="gene designation" value="DSCAM"/>
</dbReference>
<dbReference type="HPA" id="ENSG00000171587">
    <property type="expression patterns" value="Group enriched (brain, pituitary gland, retina)"/>
</dbReference>
<dbReference type="MalaCards" id="DSCAM"/>
<dbReference type="MIM" id="602523">
    <property type="type" value="gene"/>
</dbReference>
<dbReference type="neXtProt" id="NX_O60469"/>
<dbReference type="OpenTargets" id="ENSG00000171587"/>
<dbReference type="PharmGKB" id="PA27491"/>
<dbReference type="VEuPathDB" id="HostDB:ENSG00000171587"/>
<dbReference type="eggNOG" id="KOG3510">
    <property type="taxonomic scope" value="Eukaryota"/>
</dbReference>
<dbReference type="GeneTree" id="ENSGT00940000154678"/>
<dbReference type="HOGENOM" id="CLU_001038_0_1_1"/>
<dbReference type="InParanoid" id="O60469"/>
<dbReference type="OMA" id="DGFDHHK"/>
<dbReference type="OrthoDB" id="152385at2759"/>
<dbReference type="PAN-GO" id="O60469">
    <property type="GO annotations" value="6 GO annotations based on evolutionary models"/>
</dbReference>
<dbReference type="PhylomeDB" id="O60469"/>
<dbReference type="TreeFam" id="TF316846"/>
<dbReference type="PathwayCommons" id="O60469"/>
<dbReference type="Reactome" id="R-HSA-376172">
    <property type="pathway name" value="DSCAM interactions"/>
</dbReference>
<dbReference type="SignaLink" id="O60469"/>
<dbReference type="SIGNOR" id="O60469"/>
<dbReference type="BioGRID-ORCS" id="1826">
    <property type="hits" value="7 hits in 1144 CRISPR screens"/>
</dbReference>
<dbReference type="ChiTaRS" id="DSCAM">
    <property type="organism name" value="human"/>
</dbReference>
<dbReference type="GenomeRNAi" id="1826"/>
<dbReference type="Pharos" id="O60469">
    <property type="development level" value="Tbio"/>
</dbReference>
<dbReference type="PRO" id="PR:O60469"/>
<dbReference type="Proteomes" id="UP000005640">
    <property type="component" value="Chromosome 21"/>
</dbReference>
<dbReference type="RNAct" id="O60469">
    <property type="molecule type" value="protein"/>
</dbReference>
<dbReference type="Bgee" id="ENSG00000171587">
    <property type="expression patterns" value="Expressed in endometrium epithelium and 59 other cell types or tissues"/>
</dbReference>
<dbReference type="ExpressionAtlas" id="O60469">
    <property type="expression patterns" value="baseline and differential"/>
</dbReference>
<dbReference type="GO" id="GO:0030424">
    <property type="term" value="C:axon"/>
    <property type="evidence" value="ECO:0000250"/>
    <property type="project" value="UniProtKB"/>
</dbReference>
<dbReference type="GO" id="GO:0030425">
    <property type="term" value="C:dendrite"/>
    <property type="evidence" value="ECO:0000250"/>
    <property type="project" value="UniProtKB"/>
</dbReference>
<dbReference type="GO" id="GO:0005576">
    <property type="term" value="C:extracellular region"/>
    <property type="evidence" value="ECO:0007669"/>
    <property type="project" value="UniProtKB-SubCell"/>
</dbReference>
<dbReference type="GO" id="GO:0030426">
    <property type="term" value="C:growth cone"/>
    <property type="evidence" value="ECO:0000250"/>
    <property type="project" value="UniProtKB"/>
</dbReference>
<dbReference type="GO" id="GO:0016020">
    <property type="term" value="C:membrane"/>
    <property type="evidence" value="ECO:0000304"/>
    <property type="project" value="ProtInc"/>
</dbReference>
<dbReference type="GO" id="GO:0043025">
    <property type="term" value="C:neuronal cell body"/>
    <property type="evidence" value="ECO:0000250"/>
    <property type="project" value="UniProtKB"/>
</dbReference>
<dbReference type="GO" id="GO:0005886">
    <property type="term" value="C:plasma membrane"/>
    <property type="evidence" value="ECO:0000250"/>
    <property type="project" value="UniProtKB"/>
</dbReference>
<dbReference type="GO" id="GO:0045202">
    <property type="term" value="C:synapse"/>
    <property type="evidence" value="ECO:0000250"/>
    <property type="project" value="UniProtKB"/>
</dbReference>
<dbReference type="GO" id="GO:0098632">
    <property type="term" value="F:cell-cell adhesion mediator activity"/>
    <property type="evidence" value="ECO:0000318"/>
    <property type="project" value="GO_Central"/>
</dbReference>
<dbReference type="GO" id="GO:1990890">
    <property type="term" value="F:netrin receptor binding"/>
    <property type="evidence" value="ECO:0000353"/>
    <property type="project" value="UniProtKB"/>
</dbReference>
<dbReference type="GO" id="GO:1990782">
    <property type="term" value="F:protein tyrosine kinase binding"/>
    <property type="evidence" value="ECO:0007669"/>
    <property type="project" value="Ensembl"/>
</dbReference>
<dbReference type="GO" id="GO:0007411">
    <property type="term" value="P:axon guidance"/>
    <property type="evidence" value="ECO:0000250"/>
    <property type="project" value="UniProtKB"/>
</dbReference>
<dbReference type="GO" id="GO:0060219">
    <property type="term" value="P:camera-type eye photoreceptor cell differentiation"/>
    <property type="evidence" value="ECO:0000250"/>
    <property type="project" value="UniProtKB"/>
</dbReference>
<dbReference type="GO" id="GO:0007155">
    <property type="term" value="P:cell adhesion"/>
    <property type="evidence" value="ECO:0000304"/>
    <property type="project" value="ProtInc"/>
</dbReference>
<dbReference type="GO" id="GO:0007417">
    <property type="term" value="P:central nervous system development"/>
    <property type="evidence" value="ECO:0000318"/>
    <property type="project" value="GO_Central"/>
</dbReference>
<dbReference type="GO" id="GO:0048813">
    <property type="term" value="P:dendrite morphogenesis"/>
    <property type="evidence" value="ECO:0007669"/>
    <property type="project" value="Ensembl"/>
</dbReference>
<dbReference type="GO" id="GO:0070593">
    <property type="term" value="P:dendrite self-avoidance"/>
    <property type="evidence" value="ECO:0000250"/>
    <property type="project" value="UniProtKB"/>
</dbReference>
<dbReference type="GO" id="GO:0060996">
    <property type="term" value="P:dendritic spine development"/>
    <property type="evidence" value="ECO:0007669"/>
    <property type="project" value="Ensembl"/>
</dbReference>
<dbReference type="GO" id="GO:0007156">
    <property type="term" value="P:homophilic cell adhesion via plasma membrane adhesion molecules"/>
    <property type="evidence" value="ECO:0000250"/>
    <property type="project" value="UniProtKB"/>
</dbReference>
<dbReference type="GO" id="GO:0007626">
    <property type="term" value="P:locomotory behavior"/>
    <property type="evidence" value="ECO:0007669"/>
    <property type="project" value="Ensembl"/>
</dbReference>
<dbReference type="GO" id="GO:0007162">
    <property type="term" value="P:negative regulation of cell adhesion"/>
    <property type="evidence" value="ECO:0000250"/>
    <property type="project" value="UniProtKB"/>
</dbReference>
<dbReference type="GO" id="GO:0007399">
    <property type="term" value="P:nervous system development"/>
    <property type="evidence" value="ECO:0000304"/>
    <property type="project" value="ProtInc"/>
</dbReference>
<dbReference type="GO" id="GO:0048842">
    <property type="term" value="P:positive regulation of axon extension involved in axon guidance"/>
    <property type="evidence" value="ECO:0000314"/>
    <property type="project" value="UniProtKB"/>
</dbReference>
<dbReference type="GO" id="GO:0042327">
    <property type="term" value="P:positive regulation of phosphorylation"/>
    <property type="evidence" value="ECO:0000314"/>
    <property type="project" value="UniProtKB"/>
</dbReference>
<dbReference type="GO" id="GO:0060060">
    <property type="term" value="P:post-embryonic retina morphogenesis in camera-type eye"/>
    <property type="evidence" value="ECO:0007669"/>
    <property type="project" value="Ensembl"/>
</dbReference>
<dbReference type="GO" id="GO:0010842">
    <property type="term" value="P:retina layer formation"/>
    <property type="evidence" value="ECO:0000250"/>
    <property type="project" value="UniProtKB"/>
</dbReference>
<dbReference type="GO" id="GO:0035176">
    <property type="term" value="P:social behavior"/>
    <property type="evidence" value="ECO:0007669"/>
    <property type="project" value="Ensembl"/>
</dbReference>
<dbReference type="GO" id="GO:0007416">
    <property type="term" value="P:synapse assembly"/>
    <property type="evidence" value="ECO:0000250"/>
    <property type="project" value="UniProtKB"/>
</dbReference>
<dbReference type="GO" id="GO:0035249">
    <property type="term" value="P:synaptic transmission, glutamatergic"/>
    <property type="evidence" value="ECO:0007669"/>
    <property type="project" value="Ensembl"/>
</dbReference>
<dbReference type="CDD" id="cd00063">
    <property type="entry name" value="FN3"/>
    <property type="match status" value="6"/>
</dbReference>
<dbReference type="CDD" id="cd00096">
    <property type="entry name" value="Ig"/>
    <property type="match status" value="2"/>
</dbReference>
<dbReference type="CDD" id="cd05734">
    <property type="entry name" value="Ig_DSCAM"/>
    <property type="match status" value="1"/>
</dbReference>
<dbReference type="CDD" id="cd05735">
    <property type="entry name" value="Ig_DSCAM"/>
    <property type="match status" value="1"/>
</dbReference>
<dbReference type="CDD" id="cd20958">
    <property type="entry name" value="IgI_5_Dscam"/>
    <property type="match status" value="1"/>
</dbReference>
<dbReference type="FunFam" id="2.60.40.10:FF:000333">
    <property type="entry name" value="Down syndrome cell adhesion molecule"/>
    <property type="match status" value="1"/>
</dbReference>
<dbReference type="FunFam" id="2.60.40.10:FF:000401">
    <property type="entry name" value="Down syndrome cell adhesion molecule"/>
    <property type="match status" value="1"/>
</dbReference>
<dbReference type="FunFam" id="2.60.40.10:FF:000729">
    <property type="entry name" value="Down syndrome cell adhesion molecule"/>
    <property type="match status" value="1"/>
</dbReference>
<dbReference type="FunFam" id="2.60.40.10:FF:000141">
    <property type="entry name" value="Down syndrome cell adhesion molecule a"/>
    <property type="match status" value="1"/>
</dbReference>
<dbReference type="FunFam" id="2.60.40.10:FF:000176">
    <property type="entry name" value="Down syndrome cell adhesion molecule a"/>
    <property type="match status" value="1"/>
</dbReference>
<dbReference type="FunFam" id="2.60.40.10:FF:000215">
    <property type="entry name" value="Down syndrome cell adhesion molecule a"/>
    <property type="match status" value="1"/>
</dbReference>
<dbReference type="FunFam" id="2.60.40.10:FF:000017">
    <property type="entry name" value="Down syndrome cell adhesion molecule b"/>
    <property type="match status" value="1"/>
</dbReference>
<dbReference type="FunFam" id="2.60.40.10:FF:000104">
    <property type="entry name" value="Down syndrome cell adhesion molecule b"/>
    <property type="match status" value="1"/>
</dbReference>
<dbReference type="FunFam" id="2.60.40.10:FF:000167">
    <property type="entry name" value="Down syndrome cell adhesion molecule b"/>
    <property type="match status" value="1"/>
</dbReference>
<dbReference type="FunFam" id="2.60.40.10:FF:000172">
    <property type="entry name" value="Down syndrome cell adhesion molecule b"/>
    <property type="match status" value="1"/>
</dbReference>
<dbReference type="FunFam" id="2.60.40.10:FF:000219">
    <property type="entry name" value="Down syndrome cell adhesion molecule homolog"/>
    <property type="match status" value="1"/>
</dbReference>
<dbReference type="FunFam" id="2.60.40.10:FF:000229">
    <property type="entry name" value="Down syndrome cell adhesion molecule homolog"/>
    <property type="match status" value="1"/>
</dbReference>
<dbReference type="FunFam" id="2.60.40.10:FF:000120">
    <property type="entry name" value="Down syndrome cell adhesion molecule like 1"/>
    <property type="match status" value="1"/>
</dbReference>
<dbReference type="FunFam" id="2.60.40.10:FF:000264">
    <property type="entry name" value="Down syndrome cell adhesion molecule like 1"/>
    <property type="match status" value="1"/>
</dbReference>
<dbReference type="FunFam" id="2.60.40.10:FF:000315">
    <property type="entry name" value="Down syndrome cell adhesion molecule like 1"/>
    <property type="match status" value="1"/>
</dbReference>
<dbReference type="FunFam" id="2.60.40.10:FF:000477">
    <property type="entry name" value="DS cell adhesion molecule like 1"/>
    <property type="match status" value="1"/>
</dbReference>
<dbReference type="Gene3D" id="2.60.40.10">
    <property type="entry name" value="Immunoglobulins"/>
    <property type="match status" value="16"/>
</dbReference>
<dbReference type="InterPro" id="IPR056754">
    <property type="entry name" value="DSCAM/DSCAML_C"/>
</dbReference>
<dbReference type="InterPro" id="IPR003961">
    <property type="entry name" value="FN3_dom"/>
</dbReference>
<dbReference type="InterPro" id="IPR036116">
    <property type="entry name" value="FN3_sf"/>
</dbReference>
<dbReference type="InterPro" id="IPR007110">
    <property type="entry name" value="Ig-like_dom"/>
</dbReference>
<dbReference type="InterPro" id="IPR036179">
    <property type="entry name" value="Ig-like_dom_sf"/>
</dbReference>
<dbReference type="InterPro" id="IPR013783">
    <property type="entry name" value="Ig-like_fold"/>
</dbReference>
<dbReference type="InterPro" id="IPR013098">
    <property type="entry name" value="Ig_I-set"/>
</dbReference>
<dbReference type="InterPro" id="IPR003599">
    <property type="entry name" value="Ig_sub"/>
</dbReference>
<dbReference type="InterPro" id="IPR003598">
    <property type="entry name" value="Ig_sub2"/>
</dbReference>
<dbReference type="InterPro" id="IPR013106">
    <property type="entry name" value="Ig_V-set"/>
</dbReference>
<dbReference type="PANTHER" id="PTHR44170:SF6">
    <property type="entry name" value="CONTACTIN"/>
    <property type="match status" value="1"/>
</dbReference>
<dbReference type="PANTHER" id="PTHR44170">
    <property type="entry name" value="PROTEIN SIDEKICK"/>
    <property type="match status" value="1"/>
</dbReference>
<dbReference type="Pfam" id="PF00041">
    <property type="entry name" value="fn3"/>
    <property type="match status" value="5"/>
</dbReference>
<dbReference type="Pfam" id="PF25059">
    <property type="entry name" value="FN3_DSCAM-DSCAML_C"/>
    <property type="match status" value="1"/>
</dbReference>
<dbReference type="Pfam" id="PF07679">
    <property type="entry name" value="I-set"/>
    <property type="match status" value="5"/>
</dbReference>
<dbReference type="Pfam" id="PF13927">
    <property type="entry name" value="Ig_3"/>
    <property type="match status" value="3"/>
</dbReference>
<dbReference type="SMART" id="SM00060">
    <property type="entry name" value="FN3"/>
    <property type="match status" value="6"/>
</dbReference>
<dbReference type="SMART" id="SM00409">
    <property type="entry name" value="IG"/>
    <property type="match status" value="9"/>
</dbReference>
<dbReference type="SMART" id="SM00408">
    <property type="entry name" value="IGc2"/>
    <property type="match status" value="9"/>
</dbReference>
<dbReference type="SMART" id="SM00406">
    <property type="entry name" value="IGv"/>
    <property type="match status" value="3"/>
</dbReference>
<dbReference type="SUPFAM" id="SSF49265">
    <property type="entry name" value="Fibronectin type III"/>
    <property type="match status" value="3"/>
</dbReference>
<dbReference type="SUPFAM" id="SSF48726">
    <property type="entry name" value="Immunoglobulin"/>
    <property type="match status" value="9"/>
</dbReference>
<dbReference type="PROSITE" id="PS50853">
    <property type="entry name" value="FN3"/>
    <property type="match status" value="6"/>
</dbReference>
<dbReference type="PROSITE" id="PS50835">
    <property type="entry name" value="IG_LIKE"/>
    <property type="match status" value="9"/>
</dbReference>
<organism>
    <name type="scientific">Homo sapiens</name>
    <name type="common">Human</name>
    <dbReference type="NCBI Taxonomy" id="9606"/>
    <lineage>
        <taxon>Eukaryota</taxon>
        <taxon>Metazoa</taxon>
        <taxon>Chordata</taxon>
        <taxon>Craniata</taxon>
        <taxon>Vertebrata</taxon>
        <taxon>Euteleostomi</taxon>
        <taxon>Mammalia</taxon>
        <taxon>Eutheria</taxon>
        <taxon>Euarchontoglires</taxon>
        <taxon>Primates</taxon>
        <taxon>Haplorrhini</taxon>
        <taxon>Catarrhini</taxon>
        <taxon>Hominidae</taxon>
        <taxon>Homo</taxon>
    </lineage>
</organism>
<protein>
    <recommendedName>
        <fullName evidence="12">Cell adhesion molecule DSCAM</fullName>
    </recommendedName>
    <alternativeName>
        <fullName>CHD2</fullName>
    </alternativeName>
    <alternativeName>
        <fullName>Down syndrome cell adhesion molecule</fullName>
    </alternativeName>
</protein>
<keyword id="KW-0002">3D-structure</keyword>
<keyword id="KW-0025">Alternative splicing</keyword>
<keyword id="KW-0130">Cell adhesion</keyword>
<keyword id="KW-1003">Cell membrane</keyword>
<keyword id="KW-0966">Cell projection</keyword>
<keyword id="KW-1015">Disulfide bond</keyword>
<keyword id="KW-0325">Glycoprotein</keyword>
<keyword id="KW-0393">Immunoglobulin domain</keyword>
<keyword id="KW-0472">Membrane</keyword>
<keyword id="KW-0524">Neurogenesis</keyword>
<keyword id="KW-0597">Phosphoprotein</keyword>
<keyword id="KW-1267">Proteomics identification</keyword>
<keyword id="KW-1185">Reference proteome</keyword>
<keyword id="KW-0677">Repeat</keyword>
<keyword id="KW-0964">Secreted</keyword>
<keyword id="KW-0732">Signal</keyword>
<keyword id="KW-0770">Synapse</keyword>
<keyword id="KW-0812">Transmembrane</keyword>
<keyword id="KW-1133">Transmembrane helix</keyword>
<proteinExistence type="evidence at protein level"/>